<gene>
    <name type="primary">traY</name>
    <name type="ordered locus">ECOK12F073</name>
</gene>
<comment type="function">
    <text evidence="1 2 3 4">Conjugative DNA transfer (CDT) is the unidirectional transfer of ssDNA plasmid from a donor to a recipient cell. It is the central mechanism by which antibiotic resistance and virulence factors are propagated in bacterial populations. Part of the relaxosome, which facilitates a site- and strand-specific cut in the origin of transfer by TraI, at the nic site. Relaxosome formation requires binding of IHF and TraY to the oriT region, which then facilitates binding of TraI. Upon binding to the oriT region TraY bends DNA 50 to 55 degrees. Also positively regulates tra gene expression.</text>
</comment>
<comment type="subunit">
    <text evidence="1 3">Part of the relaxosome, a complex composed of plasmid encoded TraI, TraM, TraY and host-encoded IHF bound to the F plasmid origin of transfer (oriT). Interacts with TraM, probably through its C-terminus.</text>
</comment>
<comment type="subcellular location">
    <subcellularLocation>
        <location evidence="5">Cytoplasm</location>
    </subcellularLocation>
</comment>
<comment type="similarity">
    <text evidence="5">Belongs to the TraY family.</text>
</comment>
<proteinExistence type="evidence at protein level"/>
<sequence length="131" mass="15183">MKRFGTRSATGKMVKLKLPVDVESLLIEASNRSGRSRSFEAVIRLKDHLHRYPKFNRAGNIYGKSLVKYLTMRLDDETNQLLIAAKNRSGWCKTDEAADRVIDHLIKFPDFYNSEIFREADKEEDITFNTL</sequence>
<accession>P06627</accession>
<accession>P71247</accession>
<protein>
    <recommendedName>
        <fullName>Relaxosome protein TraY</fullName>
    </recommendedName>
</protein>
<reference key="1">
    <citation type="journal article" date="1994" name="Microbiol. Rev.">
        <title>Analysis of the sequence and gene products of the transfer region of the F sex factor.</title>
        <authorList>
            <person name="Frost L.S."/>
            <person name="Ippen-Ihler K."/>
            <person name="Skurray R.A."/>
        </authorList>
    </citation>
    <scope>NUCLEOTIDE SEQUENCE [GENOMIC DNA]</scope>
    <source>
        <plasmid>F</plasmid>
    </source>
</reference>
<reference key="2">
    <citation type="submission" date="2000-04" db="EMBL/GenBank/DDBJ databases">
        <title>Complete nucleotide sequence of the F plasmid: its implications for organization and diversification of plasmid genomes.</title>
        <authorList>
            <person name="Shimizu H."/>
            <person name="Saitoh Y."/>
            <person name="Suda Y."/>
            <person name="Uehara K."/>
            <person name="Sampei G."/>
            <person name="Mizobuchi K."/>
        </authorList>
    </citation>
    <scope>NUCLEOTIDE SEQUENCE [LARGE SCALE GENOMIC DNA]</scope>
    <source>
        <strain>K12 / CR63</strain>
        <plasmid>F</plasmid>
    </source>
</reference>
<reference key="3">
    <citation type="journal article" date="1983" name="Gene">
        <title>The control region of the F plasmid transfer operon: DNA sequence of the traJ and traY genes and characterisation of the traY leads to Z promoter.</title>
        <authorList>
            <person name="Fowler T."/>
            <person name="Taylor L."/>
            <person name="Thompson R."/>
        </authorList>
    </citation>
    <scope>NUCLEOTIDE SEQUENCE [GENOMIC DNA] OF 13-131</scope>
    <source>
        <plasmid>F</plasmid>
    </source>
</reference>
<reference key="4">
    <citation type="journal article" date="1996" name="Genetics">
        <title>Mosaic structure of plasmids from natural populations of Escherichia coli.</title>
        <authorList>
            <person name="Boyd E.F."/>
            <person name="Hill C.W."/>
            <person name="Rich S.M."/>
            <person name="Hartl D.L."/>
        </authorList>
    </citation>
    <scope>NUCLEOTIDE SEQUENCE [GENOMIC DNA] OF 10-117</scope>
    <source>
        <strain>ECOR 30</strain>
        <strain>ECOR 37</strain>
        <strain>ECOR 58</strain>
        <strain>ECOR 62</strain>
        <plasmid>F</plasmid>
    </source>
</reference>
<reference key="5">
    <citation type="journal article" date="1994" name="Mol. Microbiol.">
        <title>Mutational and physical analysis of F plasmid traY protein binding to oriT.</title>
        <authorList>
            <person name="Luo Y."/>
            <person name="Gao Q."/>
            <person name="Deonier R.C."/>
        </authorList>
    </citation>
    <scope>DNA-BINDING</scope>
    <scope>FUNCTION IN DNA-BENDING</scope>
    <scope>SUBUNIT</scope>
    <source>
        <plasmid>F</plasmid>
    </source>
</reference>
<reference key="6">
    <citation type="journal article" date="1995" name="J. Biol. Chem.">
        <title>The traY gene product and integration host factor stimulate Escherichia coli DNA helicase I-catalyzed nicking at the F plasmid oriT.</title>
        <authorList>
            <person name="Nelson W.C."/>
            <person name="Howard M.T."/>
            <person name="Sherman J.A."/>
            <person name="Matson S.W."/>
        </authorList>
    </citation>
    <scope>FUNCTION IN F PLASMID NICKING</scope>
    <source>
        <plasmid>F</plasmid>
    </source>
</reference>
<reference key="7">
    <citation type="journal article" date="1995" name="J. Biol. Chem.">
        <title>Stepwise assembly of a relaxosome at the F plasmid origin of transfer.</title>
        <authorList>
            <person name="Howard M.T."/>
            <person name="Nelson W.C."/>
            <person name="Matson S.W."/>
        </authorList>
    </citation>
    <scope>CHARACTERIZATION OF RELAXOSOME ASSEMBLY ORDER</scope>
    <source>
        <plasmid>F</plasmid>
    </source>
</reference>
<reference key="8">
    <citation type="journal article" date="1996" name="J. Bacteriol.">
        <title>Effect of traY amber mutations on F-plasmid traY promoter activity in vivo.</title>
        <authorList>
            <person name="Silverman P.M."/>
            <person name="Sholl A."/>
        </authorList>
    </citation>
    <scope>FUNCTION IN GENE REGULATION</scope>
    <source>
        <plasmid>F</plasmid>
    </source>
</reference>
<reference key="9">
    <citation type="journal article" date="2007" name="Mol. Microbiol.">
        <title>The F plasmid-encoded TraM protein stimulates relaxosome-mediated cleavage at oriT through an interaction with TraI.</title>
        <authorList>
            <person name="Ragonese H."/>
            <person name="Haisch D."/>
            <person name="Villareal E."/>
            <person name="Choi J.H."/>
            <person name="Matson S.W."/>
        </authorList>
    </citation>
    <scope>FUNCTION IN TRAI NICKING</scope>
    <scope>SUBUNIT</scope>
    <source>
        <plasmid>F</plasmid>
    </source>
</reference>
<feature type="chain" id="PRO_0000068480" description="Relaxosome protein TraY">
    <location>
        <begin position="1"/>
        <end position="131"/>
    </location>
</feature>
<feature type="sequence variant" description="In strain: ECOR 37.">
    <original>G</original>
    <variation>D</variation>
    <location>
        <position position="63"/>
    </location>
</feature>
<keyword id="KW-0010">Activator</keyword>
<keyword id="KW-0184">Conjugation</keyword>
<keyword id="KW-0963">Cytoplasm</keyword>
<keyword id="KW-0238">DNA-binding</keyword>
<keyword id="KW-0614">Plasmid</keyword>
<keyword id="KW-0804">Transcription</keyword>
<keyword id="KW-0805">Transcription regulation</keyword>
<name>TRAY1_ECOLI</name>
<evidence type="ECO:0000269" key="1">
    <source>
    </source>
</evidence>
<evidence type="ECO:0000269" key="2">
    <source>
    </source>
</evidence>
<evidence type="ECO:0000269" key="3">
    <source>
    </source>
</evidence>
<evidence type="ECO:0000269" key="4">
    <source>
    </source>
</evidence>
<evidence type="ECO:0000305" key="5"/>
<dbReference type="EMBL" id="U01159">
    <property type="protein sequence ID" value="AAC44202.1"/>
    <property type="molecule type" value="Genomic_DNA"/>
</dbReference>
<dbReference type="EMBL" id="AP001918">
    <property type="protein sequence ID" value="BAA97943.1"/>
    <property type="molecule type" value="Genomic_DNA"/>
</dbReference>
<dbReference type="EMBL" id="K01147">
    <property type="protein sequence ID" value="AAA24909.1"/>
    <property type="molecule type" value="Genomic_DNA"/>
</dbReference>
<dbReference type="EMBL" id="U50666">
    <property type="protein sequence ID" value="AAC44250.1"/>
    <property type="molecule type" value="Genomic_DNA"/>
</dbReference>
<dbReference type="EMBL" id="U50662">
    <property type="protein sequence ID" value="AAC44246.1"/>
    <property type="molecule type" value="Genomic_DNA"/>
</dbReference>
<dbReference type="EMBL" id="U50663">
    <property type="protein sequence ID" value="AAC44247.1"/>
    <property type="molecule type" value="Genomic_DNA"/>
</dbReference>
<dbReference type="EMBL" id="U50664">
    <property type="protein sequence ID" value="AAC44248.1"/>
    <property type="molecule type" value="Genomic_DNA"/>
</dbReference>
<dbReference type="PIR" id="B21874">
    <property type="entry name" value="BVECTY"/>
</dbReference>
<dbReference type="RefSeq" id="NP_061452.1">
    <property type="nucleotide sequence ID" value="NC_002483.1"/>
</dbReference>
<dbReference type="RefSeq" id="NP_862918.1">
    <property type="nucleotide sequence ID" value="NC_004998.1"/>
</dbReference>
<dbReference type="RefSeq" id="WP_001309237.1">
    <property type="nucleotide sequence ID" value="NZ_SSZK01000064.1"/>
</dbReference>
<dbReference type="RefSeq" id="YP_009068352.1">
    <property type="nucleotide sequence ID" value="NC_025139.1"/>
</dbReference>
<dbReference type="RefSeq" id="YP_009070617.1">
    <property type="nucleotide sequence ID" value="NC_025175.1"/>
</dbReference>
<dbReference type="GeneID" id="75203833"/>
<dbReference type="KEGG" id="ecoc:C3026_24470"/>
<dbReference type="PRO" id="PR:P06627"/>
<dbReference type="GO" id="GO:0005737">
    <property type="term" value="C:cytoplasm"/>
    <property type="evidence" value="ECO:0007669"/>
    <property type="project" value="UniProtKB-SubCell"/>
</dbReference>
<dbReference type="GO" id="GO:0003677">
    <property type="term" value="F:DNA binding"/>
    <property type="evidence" value="ECO:0007669"/>
    <property type="project" value="UniProtKB-KW"/>
</dbReference>
<dbReference type="InterPro" id="IPR008876">
    <property type="entry name" value="TraY"/>
</dbReference>
<dbReference type="NCBIfam" id="NF010303">
    <property type="entry name" value="PRK13740.1-4"/>
    <property type="match status" value="1"/>
</dbReference>
<dbReference type="Pfam" id="PF05509">
    <property type="entry name" value="TraY"/>
    <property type="match status" value="2"/>
</dbReference>
<organism>
    <name type="scientific">Escherichia coli (strain K12)</name>
    <dbReference type="NCBI Taxonomy" id="83333"/>
    <lineage>
        <taxon>Bacteria</taxon>
        <taxon>Pseudomonadati</taxon>
        <taxon>Pseudomonadota</taxon>
        <taxon>Gammaproteobacteria</taxon>
        <taxon>Enterobacterales</taxon>
        <taxon>Enterobacteriaceae</taxon>
        <taxon>Escherichia</taxon>
    </lineage>
</organism>
<geneLocation type="plasmid">
    <name>F</name>
</geneLocation>